<dbReference type="EC" id="3.4.19.12" evidence="4"/>
<dbReference type="EMBL" id="AF229643">
    <property type="protein sequence ID" value="AAF66953.1"/>
    <property type="status" value="ALT_INIT"/>
    <property type="molecule type" value="mRNA"/>
</dbReference>
<dbReference type="EMBL" id="AK028249">
    <property type="protein sequence ID" value="BAC25840.1"/>
    <property type="status" value="ALT_SEQ"/>
    <property type="molecule type" value="mRNA"/>
</dbReference>
<dbReference type="EMBL" id="AK030383">
    <property type="protein sequence ID" value="BAC26935.1"/>
    <property type="status" value="ALT_INIT"/>
    <property type="molecule type" value="mRNA"/>
</dbReference>
<dbReference type="EMBL" id="AL663104">
    <property type="status" value="NOT_ANNOTATED_CDS"/>
    <property type="molecule type" value="Genomic_DNA"/>
</dbReference>
<dbReference type="CCDS" id="CCDS52983.1"/>
<dbReference type="RefSeq" id="NP_062334.2">
    <property type="nucleotide sequence ID" value="NM_019461.4"/>
</dbReference>
<dbReference type="SMR" id="Q8CEG8"/>
<dbReference type="FunCoup" id="Q8CEG8">
    <property type="interactions" value="1020"/>
</dbReference>
<dbReference type="STRING" id="10090.ENSMUSP00000139402"/>
<dbReference type="MEROPS" id="C19.075"/>
<dbReference type="iPTMnet" id="Q8CEG8"/>
<dbReference type="PhosphoSitePlus" id="Q8CEG8"/>
<dbReference type="PaxDb" id="10090-ENSMUSP00000111409"/>
<dbReference type="ProteomicsDB" id="298410"/>
<dbReference type="Pumba" id="Q8CEG8"/>
<dbReference type="Antibodypedia" id="73225">
    <property type="antibodies" value="68 antibodies from 13 providers"/>
</dbReference>
<dbReference type="DNASU" id="54651"/>
<dbReference type="Ensembl" id="ENSMUST00000115744.2">
    <property type="protein sequence ID" value="ENSMUSP00000111409.2"/>
    <property type="gene ID" value="ENSMUSG00000046269.18"/>
</dbReference>
<dbReference type="Ensembl" id="ENSMUST00000178293.9">
    <property type="protein sequence ID" value="ENSMUSP00000137509.2"/>
    <property type="gene ID" value="ENSMUSG00000046269.18"/>
</dbReference>
<dbReference type="Ensembl" id="ENSMUST00000191497.2">
    <property type="protein sequence ID" value="ENSMUSP00000139402.2"/>
    <property type="gene ID" value="ENSMUSG00000046269.18"/>
</dbReference>
<dbReference type="GeneID" id="54651"/>
<dbReference type="KEGG" id="mmu:54651"/>
<dbReference type="UCSC" id="uc012hee.1">
    <property type="organism name" value="mouse"/>
</dbReference>
<dbReference type="AGR" id="MGI:1859645"/>
<dbReference type="CTD" id="389856"/>
<dbReference type="MGI" id="MGI:1859645">
    <property type="gene designation" value="Usp27x"/>
</dbReference>
<dbReference type="VEuPathDB" id="HostDB:ENSMUSG00000046269"/>
<dbReference type="eggNOG" id="KOG1867">
    <property type="taxonomic scope" value="Eukaryota"/>
</dbReference>
<dbReference type="GeneTree" id="ENSGT00940000162674"/>
<dbReference type="HOGENOM" id="CLU_008279_11_0_1"/>
<dbReference type="InParanoid" id="Q8CEG8"/>
<dbReference type="OMA" id="TEKHIHE"/>
<dbReference type="OrthoDB" id="47475at2759"/>
<dbReference type="PhylomeDB" id="Q8CEG8"/>
<dbReference type="TreeFam" id="TF323554"/>
<dbReference type="BioGRID-ORCS" id="54651">
    <property type="hits" value="3 hits in 77 CRISPR screens"/>
</dbReference>
<dbReference type="PRO" id="PR:Q8CEG8"/>
<dbReference type="Proteomes" id="UP000000589">
    <property type="component" value="Chromosome X"/>
</dbReference>
<dbReference type="RNAct" id="Q8CEG8">
    <property type="molecule type" value="protein"/>
</dbReference>
<dbReference type="Bgee" id="ENSMUSG00000046269">
    <property type="expression patterns" value="Expressed in supraoptic nucleus and 176 other cell types or tissues"/>
</dbReference>
<dbReference type="GO" id="GO:0005829">
    <property type="term" value="C:cytosol"/>
    <property type="evidence" value="ECO:0007669"/>
    <property type="project" value="UniProtKB-SubCell"/>
</dbReference>
<dbReference type="GO" id="GO:0005634">
    <property type="term" value="C:nucleus"/>
    <property type="evidence" value="ECO:0007669"/>
    <property type="project" value="UniProtKB-SubCell"/>
</dbReference>
<dbReference type="GO" id="GO:0004843">
    <property type="term" value="F:cysteine-type deubiquitinase activity"/>
    <property type="evidence" value="ECO:0000314"/>
    <property type="project" value="UniProtKB"/>
</dbReference>
<dbReference type="GO" id="GO:0004197">
    <property type="term" value="F:cysteine-type endopeptidase activity"/>
    <property type="evidence" value="ECO:0000250"/>
    <property type="project" value="UniProtKB"/>
</dbReference>
<dbReference type="GO" id="GO:1990380">
    <property type="term" value="F:K48-linked deubiquitinase activity"/>
    <property type="evidence" value="ECO:0000314"/>
    <property type="project" value="UniProtKB"/>
</dbReference>
<dbReference type="GO" id="GO:0061578">
    <property type="term" value="F:K63-linked deubiquitinase activity"/>
    <property type="evidence" value="ECO:0000314"/>
    <property type="project" value="UniProtKB"/>
</dbReference>
<dbReference type="GO" id="GO:0051607">
    <property type="term" value="P:defense response to virus"/>
    <property type="evidence" value="ECO:0000250"/>
    <property type="project" value="UniProtKB"/>
</dbReference>
<dbReference type="GO" id="GO:0045087">
    <property type="term" value="P:innate immune response"/>
    <property type="evidence" value="ECO:0007669"/>
    <property type="project" value="UniProtKB-KW"/>
</dbReference>
<dbReference type="GO" id="GO:0043065">
    <property type="term" value="P:positive regulation of apoptotic process"/>
    <property type="evidence" value="ECO:0000314"/>
    <property type="project" value="UniProtKB"/>
</dbReference>
<dbReference type="GO" id="GO:0060340">
    <property type="term" value="P:positive regulation of type I interferon-mediated signaling pathway"/>
    <property type="evidence" value="ECO:0000250"/>
    <property type="project" value="UniProtKB"/>
</dbReference>
<dbReference type="GO" id="GO:0016579">
    <property type="term" value="P:protein deubiquitination"/>
    <property type="evidence" value="ECO:0000314"/>
    <property type="project" value="UniProtKB"/>
</dbReference>
<dbReference type="GO" id="GO:0071108">
    <property type="term" value="P:protein K48-linked deubiquitination"/>
    <property type="evidence" value="ECO:0000314"/>
    <property type="project" value="UniProtKB"/>
</dbReference>
<dbReference type="GO" id="GO:0070536">
    <property type="term" value="P:protein K63-linked deubiquitination"/>
    <property type="evidence" value="ECO:0000314"/>
    <property type="project" value="UniProtKB"/>
</dbReference>
<dbReference type="GO" id="GO:0050821">
    <property type="term" value="P:protein stabilization"/>
    <property type="evidence" value="ECO:0000314"/>
    <property type="project" value="UniProtKB"/>
</dbReference>
<dbReference type="GO" id="GO:0006508">
    <property type="term" value="P:proteolysis"/>
    <property type="evidence" value="ECO:0007669"/>
    <property type="project" value="UniProtKB-KW"/>
</dbReference>
<dbReference type="CDD" id="cd02660">
    <property type="entry name" value="Peptidase_C19D"/>
    <property type="match status" value="1"/>
</dbReference>
<dbReference type="FunFam" id="3.90.70.10:FF:000011">
    <property type="entry name" value="Ubiquitinyl hydrolase 1"/>
    <property type="match status" value="1"/>
</dbReference>
<dbReference type="Gene3D" id="3.90.70.10">
    <property type="entry name" value="Cysteine proteinases"/>
    <property type="match status" value="1"/>
</dbReference>
<dbReference type="InterPro" id="IPR038765">
    <property type="entry name" value="Papain-like_cys_pep_sf"/>
</dbReference>
<dbReference type="InterPro" id="IPR001394">
    <property type="entry name" value="Peptidase_C19_UCH"/>
</dbReference>
<dbReference type="InterPro" id="IPR050185">
    <property type="entry name" value="Ub_carboxyl-term_hydrolase"/>
</dbReference>
<dbReference type="InterPro" id="IPR018200">
    <property type="entry name" value="USP_CS"/>
</dbReference>
<dbReference type="InterPro" id="IPR028889">
    <property type="entry name" value="USP_dom"/>
</dbReference>
<dbReference type="PANTHER" id="PTHR21646">
    <property type="entry name" value="UBIQUITIN CARBOXYL-TERMINAL HYDROLASE"/>
    <property type="match status" value="1"/>
</dbReference>
<dbReference type="PANTHER" id="PTHR21646:SF30">
    <property type="entry name" value="UBIQUITIN CARBOXYL-TERMINAL HYDROLASE 27"/>
    <property type="match status" value="1"/>
</dbReference>
<dbReference type="Pfam" id="PF00443">
    <property type="entry name" value="UCH"/>
    <property type="match status" value="1"/>
</dbReference>
<dbReference type="SUPFAM" id="SSF54001">
    <property type="entry name" value="Cysteine proteinases"/>
    <property type="match status" value="1"/>
</dbReference>
<dbReference type="PROSITE" id="PS00972">
    <property type="entry name" value="USP_1"/>
    <property type="match status" value="1"/>
</dbReference>
<dbReference type="PROSITE" id="PS00973">
    <property type="entry name" value="USP_2"/>
    <property type="match status" value="1"/>
</dbReference>
<dbReference type="PROSITE" id="PS50235">
    <property type="entry name" value="USP_3"/>
    <property type="match status" value="1"/>
</dbReference>
<name>UBP27_MOUSE</name>
<proteinExistence type="evidence at protein level"/>
<keyword id="KW-0963">Cytoplasm</keyword>
<keyword id="KW-0378">Hydrolase</keyword>
<keyword id="KW-0391">Immunity</keyword>
<keyword id="KW-0399">Innate immunity</keyword>
<keyword id="KW-0539">Nucleus</keyword>
<keyword id="KW-0645">Protease</keyword>
<keyword id="KW-1185">Reference proteome</keyword>
<keyword id="KW-0788">Thiol protease</keyword>
<keyword id="KW-0833">Ubl conjugation pathway</keyword>
<gene>
    <name evidence="7" type="primary">Usp27x</name>
    <name type="synonym">Usp27</name>
</gene>
<reference key="1">
    <citation type="journal article" date="2000" name="Genomics">
        <title>A transcript map of a 2-Mb BAC contig in the proximal portion of the mouse X chromosome and regional mapping of the scurfy mutation.</title>
        <authorList>
            <person name="Means G.D."/>
            <person name="Toy D.Y."/>
            <person name="Baum P.R."/>
            <person name="Derry J.M.J."/>
        </authorList>
    </citation>
    <scope>NUCLEOTIDE SEQUENCE [MRNA]</scope>
</reference>
<reference key="2">
    <citation type="journal article" date="2005" name="Science">
        <title>The transcriptional landscape of the mammalian genome.</title>
        <authorList>
            <person name="Carninci P."/>
            <person name="Kasukawa T."/>
            <person name="Katayama S."/>
            <person name="Gough J."/>
            <person name="Frith M.C."/>
            <person name="Maeda N."/>
            <person name="Oyama R."/>
            <person name="Ravasi T."/>
            <person name="Lenhard B."/>
            <person name="Wells C."/>
            <person name="Kodzius R."/>
            <person name="Shimokawa K."/>
            <person name="Bajic V.B."/>
            <person name="Brenner S.E."/>
            <person name="Batalov S."/>
            <person name="Forrest A.R."/>
            <person name="Zavolan M."/>
            <person name="Davis M.J."/>
            <person name="Wilming L.G."/>
            <person name="Aidinis V."/>
            <person name="Allen J.E."/>
            <person name="Ambesi-Impiombato A."/>
            <person name="Apweiler R."/>
            <person name="Aturaliya R.N."/>
            <person name="Bailey T.L."/>
            <person name="Bansal M."/>
            <person name="Baxter L."/>
            <person name="Beisel K.W."/>
            <person name="Bersano T."/>
            <person name="Bono H."/>
            <person name="Chalk A.M."/>
            <person name="Chiu K.P."/>
            <person name="Choudhary V."/>
            <person name="Christoffels A."/>
            <person name="Clutterbuck D.R."/>
            <person name="Crowe M.L."/>
            <person name="Dalla E."/>
            <person name="Dalrymple B.P."/>
            <person name="de Bono B."/>
            <person name="Della Gatta G."/>
            <person name="di Bernardo D."/>
            <person name="Down T."/>
            <person name="Engstrom P."/>
            <person name="Fagiolini M."/>
            <person name="Faulkner G."/>
            <person name="Fletcher C.F."/>
            <person name="Fukushima T."/>
            <person name="Furuno M."/>
            <person name="Futaki S."/>
            <person name="Gariboldi M."/>
            <person name="Georgii-Hemming P."/>
            <person name="Gingeras T.R."/>
            <person name="Gojobori T."/>
            <person name="Green R.E."/>
            <person name="Gustincich S."/>
            <person name="Harbers M."/>
            <person name="Hayashi Y."/>
            <person name="Hensch T.K."/>
            <person name="Hirokawa N."/>
            <person name="Hill D."/>
            <person name="Huminiecki L."/>
            <person name="Iacono M."/>
            <person name="Ikeo K."/>
            <person name="Iwama A."/>
            <person name="Ishikawa T."/>
            <person name="Jakt M."/>
            <person name="Kanapin A."/>
            <person name="Katoh M."/>
            <person name="Kawasawa Y."/>
            <person name="Kelso J."/>
            <person name="Kitamura H."/>
            <person name="Kitano H."/>
            <person name="Kollias G."/>
            <person name="Krishnan S.P."/>
            <person name="Kruger A."/>
            <person name="Kummerfeld S.K."/>
            <person name="Kurochkin I.V."/>
            <person name="Lareau L.F."/>
            <person name="Lazarevic D."/>
            <person name="Lipovich L."/>
            <person name="Liu J."/>
            <person name="Liuni S."/>
            <person name="McWilliam S."/>
            <person name="Madan Babu M."/>
            <person name="Madera M."/>
            <person name="Marchionni L."/>
            <person name="Matsuda H."/>
            <person name="Matsuzawa S."/>
            <person name="Miki H."/>
            <person name="Mignone F."/>
            <person name="Miyake S."/>
            <person name="Morris K."/>
            <person name="Mottagui-Tabar S."/>
            <person name="Mulder N."/>
            <person name="Nakano N."/>
            <person name="Nakauchi H."/>
            <person name="Ng P."/>
            <person name="Nilsson R."/>
            <person name="Nishiguchi S."/>
            <person name="Nishikawa S."/>
            <person name="Nori F."/>
            <person name="Ohara O."/>
            <person name="Okazaki Y."/>
            <person name="Orlando V."/>
            <person name="Pang K.C."/>
            <person name="Pavan W.J."/>
            <person name="Pavesi G."/>
            <person name="Pesole G."/>
            <person name="Petrovsky N."/>
            <person name="Piazza S."/>
            <person name="Reed J."/>
            <person name="Reid J.F."/>
            <person name="Ring B.Z."/>
            <person name="Ringwald M."/>
            <person name="Rost B."/>
            <person name="Ruan Y."/>
            <person name="Salzberg S.L."/>
            <person name="Sandelin A."/>
            <person name="Schneider C."/>
            <person name="Schoenbach C."/>
            <person name="Sekiguchi K."/>
            <person name="Semple C.A."/>
            <person name="Seno S."/>
            <person name="Sessa L."/>
            <person name="Sheng Y."/>
            <person name="Shibata Y."/>
            <person name="Shimada H."/>
            <person name="Shimada K."/>
            <person name="Silva D."/>
            <person name="Sinclair B."/>
            <person name="Sperling S."/>
            <person name="Stupka E."/>
            <person name="Sugiura K."/>
            <person name="Sultana R."/>
            <person name="Takenaka Y."/>
            <person name="Taki K."/>
            <person name="Tammoja K."/>
            <person name="Tan S.L."/>
            <person name="Tang S."/>
            <person name="Taylor M.S."/>
            <person name="Tegner J."/>
            <person name="Teichmann S.A."/>
            <person name="Ueda H.R."/>
            <person name="van Nimwegen E."/>
            <person name="Verardo R."/>
            <person name="Wei C.L."/>
            <person name="Yagi K."/>
            <person name="Yamanishi H."/>
            <person name="Zabarovsky E."/>
            <person name="Zhu S."/>
            <person name="Zimmer A."/>
            <person name="Hide W."/>
            <person name="Bult C."/>
            <person name="Grimmond S.M."/>
            <person name="Teasdale R.D."/>
            <person name="Liu E.T."/>
            <person name="Brusic V."/>
            <person name="Quackenbush J."/>
            <person name="Wahlestedt C."/>
            <person name="Mattick J.S."/>
            <person name="Hume D.A."/>
            <person name="Kai C."/>
            <person name="Sasaki D."/>
            <person name="Tomaru Y."/>
            <person name="Fukuda S."/>
            <person name="Kanamori-Katayama M."/>
            <person name="Suzuki M."/>
            <person name="Aoki J."/>
            <person name="Arakawa T."/>
            <person name="Iida J."/>
            <person name="Imamura K."/>
            <person name="Itoh M."/>
            <person name="Kato T."/>
            <person name="Kawaji H."/>
            <person name="Kawagashira N."/>
            <person name="Kawashima T."/>
            <person name="Kojima M."/>
            <person name="Kondo S."/>
            <person name="Konno H."/>
            <person name="Nakano K."/>
            <person name="Ninomiya N."/>
            <person name="Nishio T."/>
            <person name="Okada M."/>
            <person name="Plessy C."/>
            <person name="Shibata K."/>
            <person name="Shiraki T."/>
            <person name="Suzuki S."/>
            <person name="Tagami M."/>
            <person name="Waki K."/>
            <person name="Watahiki A."/>
            <person name="Okamura-Oho Y."/>
            <person name="Suzuki H."/>
            <person name="Kawai J."/>
            <person name="Hayashizaki Y."/>
        </authorList>
    </citation>
    <scope>NUCLEOTIDE SEQUENCE [LARGE SCALE MRNA]</scope>
    <source>
        <strain>C57BL/6J</strain>
        <tissue>Head</tissue>
        <tissue>Pituitary</tissue>
    </source>
</reference>
<reference key="3">
    <citation type="journal article" date="2009" name="PLoS Biol.">
        <title>Lineage-specific biology revealed by a finished genome assembly of the mouse.</title>
        <authorList>
            <person name="Church D.M."/>
            <person name="Goodstadt L."/>
            <person name="Hillier L.W."/>
            <person name="Zody M.C."/>
            <person name="Goldstein S."/>
            <person name="She X."/>
            <person name="Bult C.J."/>
            <person name="Agarwala R."/>
            <person name="Cherry J.L."/>
            <person name="DiCuccio M."/>
            <person name="Hlavina W."/>
            <person name="Kapustin Y."/>
            <person name="Meric P."/>
            <person name="Maglott D."/>
            <person name="Birtle Z."/>
            <person name="Marques A.C."/>
            <person name="Graves T."/>
            <person name="Zhou S."/>
            <person name="Teague B."/>
            <person name="Potamousis K."/>
            <person name="Churas C."/>
            <person name="Place M."/>
            <person name="Herschleb J."/>
            <person name="Runnheim R."/>
            <person name="Forrest D."/>
            <person name="Amos-Landgraf J."/>
            <person name="Schwartz D.C."/>
            <person name="Cheng Z."/>
            <person name="Lindblad-Toh K."/>
            <person name="Eichler E.E."/>
            <person name="Ponting C.P."/>
        </authorList>
    </citation>
    <scope>NUCLEOTIDE SEQUENCE [LARGE SCALE GENOMIC DNA]</scope>
    <source>
        <strain>C57BL/6J</strain>
    </source>
</reference>
<reference key="4">
    <citation type="journal article" date="2016" name="EMBO Rep.">
        <title>The deubiquitinase Usp27x stabilizes the BH3-only protein Bim and enhances apoptosis.</title>
        <authorList>
            <person name="Weber A."/>
            <person name="Heinlein M."/>
            <person name="Dengjel J."/>
            <person name="Alber C."/>
            <person name="Singh P.K."/>
            <person name="Haecker G."/>
        </authorList>
    </citation>
    <scope>FUNCTION</scope>
    <scope>CATALYTIC ACTIVITY</scope>
    <scope>INTERACTION WITH BCL2L11 ISOFORM BIMEL</scope>
    <scope>SUBCELLULAR LOCATION</scope>
    <scope>MUTAGENESIS OF CYS-87</scope>
</reference>
<reference key="5">
    <citation type="journal article" date="2019" name="J. Immunol.">
        <title>USP27X deubiquitinates and stabilizes the DNA sensor cGAS to regulate cytosolic DNA-mediated signaling.</title>
        <authorList>
            <person name="Guo Y."/>
            <person name="Jiang F."/>
            <person name="Kong L."/>
            <person name="Li B."/>
            <person name="Yang Y."/>
            <person name="Zhang L."/>
            <person name="Liu B."/>
            <person name="Zheng Y."/>
            <person name="Gao C."/>
        </authorList>
    </citation>
    <scope>FUNCTION</scope>
</reference>
<organism>
    <name type="scientific">Mus musculus</name>
    <name type="common">Mouse</name>
    <dbReference type="NCBI Taxonomy" id="10090"/>
    <lineage>
        <taxon>Eukaryota</taxon>
        <taxon>Metazoa</taxon>
        <taxon>Chordata</taxon>
        <taxon>Craniata</taxon>
        <taxon>Vertebrata</taxon>
        <taxon>Euteleostomi</taxon>
        <taxon>Mammalia</taxon>
        <taxon>Eutheria</taxon>
        <taxon>Euarchontoglires</taxon>
        <taxon>Glires</taxon>
        <taxon>Rodentia</taxon>
        <taxon>Myomorpha</taxon>
        <taxon>Muroidea</taxon>
        <taxon>Muridae</taxon>
        <taxon>Murinae</taxon>
        <taxon>Mus</taxon>
        <taxon>Mus</taxon>
    </lineage>
</organism>
<comment type="function">
    <text evidence="1 4 5">Deubiquitinase involved in innate antiviral immunity by mediating deubiquitination of CGAS and RIGI (PubMed:31534008). Negatively regulates RIGI by mediating 'Lys-63'-linked deubiquitination of RIGI, inhibiting type I interferon signaling (By similarity). Also regulates 'Lys-63'-linked ubiquitination level of MDA5/IFIH1 (By similarity). Acts as a positive regulator of the cGAS-STING pathway by catalyzing 'Lys-48'-linked deubiquitination of CGAS, thereby promoting its stabilization (PubMed:31534008). Can reduce the levels of BCL2L11/BIM ubiquitination and stabilize BCL2L11 in response to the RAF-MAPK-degradation signal (PubMed:27013495). By acting on BCL2L11 levels, may counteract the anti-apoptotic effects of MAPK activity (PubMed:27013495).</text>
</comment>
<comment type="catalytic activity">
    <reaction evidence="4">
        <text>Thiol-dependent hydrolysis of ester, thioester, amide, peptide and isopeptide bonds formed by the C-terminal Gly of ubiquitin (a 76-residue protein attached to proteins as an intracellular targeting signal).</text>
        <dbReference type="EC" id="3.4.19.12"/>
    </reaction>
</comment>
<comment type="subunit">
    <text evidence="4">Interacts with phosphorylated BCL2L11 isoform BIMEL; this interaction leads to BCL2L11 deubiquitination and stabilization.</text>
</comment>
<comment type="subcellular location">
    <subcellularLocation>
        <location evidence="4">Cytoplasm</location>
        <location evidence="4">Cytosol</location>
    </subcellularLocation>
    <subcellularLocation>
        <location evidence="4">Nucleus</location>
    </subcellularLocation>
</comment>
<comment type="similarity">
    <text evidence="6">Belongs to the peptidase C19 family.</text>
</comment>
<comment type="caution">
    <text evidence="6">Although strongly related to USP22, which deubiquitinates histones, lacks the N-terminal UBP-type zinc finger, suggesting it does not have the ability to deubiquitinate histones.</text>
</comment>
<comment type="sequence caution" evidence="6">
    <conflict type="erroneous initiation">
        <sequence resource="EMBL-CDS" id="AAF66953"/>
    </conflict>
</comment>
<comment type="sequence caution" evidence="6">
    <conflict type="erroneous initiation">
        <sequence resource="EMBL-CDS" id="BAC25840"/>
    </conflict>
    <text>Extended N-terminus.</text>
</comment>
<comment type="sequence caution" evidence="6">
    <conflict type="frameshift">
        <sequence resource="EMBL-CDS" id="BAC25840"/>
    </conflict>
</comment>
<comment type="sequence caution" evidence="6">
    <conflict type="erroneous initiation">
        <sequence resource="EMBL-CDS" id="BAC26935"/>
    </conflict>
</comment>
<accession>Q8CEG8</accession>
<accession>B1ATV2</accession>
<accession>Q8BSW2</accession>
<accession>Q9JIG5</accession>
<sequence length="438" mass="49599">MCKDYVYDIDIEQIAKEEQGEALKLQASTSTEVSQQQCSVPGLGEKYPTWETTKPELELLGHNPRRRRIASSFTIGLRGLINLGNTCFMNCIVQALTHTPILRDFFLSDRHRCEMPSPELCLVCEMSSLFRELYSGNPSPHVPYKLLHLVWIHARHLAGYRQQDAHEFLIAALDVLHRHCKGDDVGKVASNPNHCNCIIDQIFTGGLQSDVTCQACHGVSTTIDPCWDISLDLPGSCTSFWPMSPGRESSLNGESHIPGITTLTDCLRRFTRPEHLGSSAKIKCGSCQSYQESTKQLTMKKLPVVACFHFKRFEHSAKQRRKITTYISFPLELDMTPFMASSKETRVNGQLQLPTNSANNENKYSLFAVVNHQGTLESGHYTSFIRHHRDQWFKCDDAVITKASIKDVLDSEGYLLFYHKQVLEPEPEKVKEMTPQAY</sequence>
<feature type="chain" id="PRO_0000367515" description="Ubiquitin carboxyl-terminal hydrolase 27">
    <location>
        <begin position="1"/>
        <end position="438"/>
    </location>
</feature>
<feature type="domain" description="USP">
    <location>
        <begin position="78"/>
        <end position="421"/>
    </location>
</feature>
<feature type="active site" description="Nucleophile" evidence="2 3">
    <location>
        <position position="87"/>
    </location>
</feature>
<feature type="active site" description="Proton acceptor" evidence="2 3">
    <location>
        <position position="380"/>
    </location>
</feature>
<feature type="mutagenesis site" description="Loss of catalytic activity. No effect on BCL2L11-binding, BCL2L11 stabilization, nor on apoptosis." evidence="4">
    <original>C</original>
    <variation>A</variation>
    <location>
        <position position="87"/>
    </location>
</feature>
<feature type="sequence conflict" description="In Ref. 1; AAF66953." evidence="6" ref="1">
    <original>T</original>
    <variation>A</variation>
    <location>
        <position position="74"/>
    </location>
</feature>
<feature type="sequence conflict" description="In Ref. 1; AAF66953." evidence="6" ref="1">
    <original>P</original>
    <variation>H</variation>
    <location>
        <position position="192"/>
    </location>
</feature>
<feature type="sequence conflict" description="In Ref. 1; AAF66953." evidence="6" ref="1">
    <original>LN</original>
    <variation>VD</variation>
    <location>
        <begin position="251"/>
        <end position="252"/>
    </location>
</feature>
<feature type="sequence conflict" description="In Ref. 1; AAF66953." evidence="6" ref="1">
    <original>T</original>
    <variation>A</variation>
    <location>
        <position position="324"/>
    </location>
</feature>
<protein>
    <recommendedName>
        <fullName>Ubiquitin carboxyl-terminal hydrolase 27</fullName>
        <ecNumber evidence="4">3.4.19.12</ecNumber>
    </recommendedName>
    <alternativeName>
        <fullName>Deubiquitinating enzyme 27</fullName>
    </alternativeName>
    <alternativeName>
        <fullName>Ubiquitin thioesterase 27</fullName>
    </alternativeName>
    <alternativeName>
        <fullName>Ubiquitin-specific-processing protease 27</fullName>
    </alternativeName>
    <alternativeName>
        <fullName>X-linked ubiquitin carboxyl-terminal hydrolase 27</fullName>
    </alternativeName>
</protein>
<evidence type="ECO:0000250" key="1">
    <source>
        <dbReference type="UniProtKB" id="A6NNY8"/>
    </source>
</evidence>
<evidence type="ECO:0000255" key="2">
    <source>
        <dbReference type="PROSITE-ProRule" id="PRU10092"/>
    </source>
</evidence>
<evidence type="ECO:0000255" key="3">
    <source>
        <dbReference type="PROSITE-ProRule" id="PRU10093"/>
    </source>
</evidence>
<evidence type="ECO:0000269" key="4">
    <source>
    </source>
</evidence>
<evidence type="ECO:0000269" key="5">
    <source>
    </source>
</evidence>
<evidence type="ECO:0000305" key="6"/>
<evidence type="ECO:0000312" key="7">
    <source>
        <dbReference type="MGI" id="MGI:1859645"/>
    </source>
</evidence>